<proteinExistence type="inferred from homology"/>
<sequence length="120" mass="13457">MIRRGDVYLADLSPVQGSEQGGVRPVVIIQNDTGNKYSPTVIVAAITDGINKAKIPTHVEIEKKKYKLDKDSVILLEQIRTLDKKRLKEKLTFLSESKMIEVDNALDISLGLNNFDHHKS</sequence>
<gene>
    <name type="primary">mazF</name>
</gene>
<organism>
    <name type="scientific">Staphylococcus epidermidis</name>
    <dbReference type="NCBI Taxonomy" id="1282"/>
    <lineage>
        <taxon>Bacteria</taxon>
        <taxon>Bacillati</taxon>
        <taxon>Bacillota</taxon>
        <taxon>Bacilli</taxon>
        <taxon>Bacillales</taxon>
        <taxon>Staphylococcaceae</taxon>
        <taxon>Staphylococcus</taxon>
    </lineage>
</organism>
<reference key="1">
    <citation type="journal article" date="2001" name="J. Bacteriol.">
        <title>Biofilm formation by Staphylococcus epidermidis depends on functional rsbU, an activator of the sigB operon: differential activation mechanisms due to ethanol and salt stress.</title>
        <authorList>
            <person name="Knobloch J.K.-M."/>
            <person name="Bartscht K."/>
            <person name="Sabottke A."/>
            <person name="Rohde H."/>
            <person name="Feucht H.-H."/>
            <person name="Mack D."/>
        </authorList>
    </citation>
    <scope>NUCLEOTIDE SEQUENCE [GENOMIC DNA]</scope>
    <source>
        <strain>Clinical isolate 1457</strain>
    </source>
</reference>
<name>MAZF_STAEP</name>
<keyword id="KW-0255">Endonuclease</keyword>
<keyword id="KW-0378">Hydrolase</keyword>
<keyword id="KW-0540">Nuclease</keyword>
<keyword id="KW-0694">RNA-binding</keyword>
<keyword id="KW-1277">Toxin-antitoxin system</keyword>
<feature type="chain" id="PRO_0000330705" description="Endoribonuclease MazF">
    <location>
        <begin position="1"/>
        <end position="120"/>
    </location>
</feature>
<evidence type="ECO:0000250" key="1">
    <source>
        <dbReference type="UniProtKB" id="A6QIR4"/>
    </source>
</evidence>
<evidence type="ECO:0000305" key="2"/>
<protein>
    <recommendedName>
        <fullName>Endoribonuclease MazF</fullName>
        <ecNumber>3.1.-.-</ecNumber>
    </recommendedName>
    <alternativeName>
        <fullName>Toxin MazF</fullName>
    </alternativeName>
    <alternativeName>
        <fullName>mRNA interferase MazF</fullName>
    </alternativeName>
</protein>
<comment type="function">
    <text evidence="1">Toxic component of a type II toxin-antitoxin (TA) system. Ribosome-independent, sequence-specific endoribonuclease that cleaves mRNA, thus inhibiting protein synthesis and inducing bacterial stasis. It cuts between the first and nucleotides of 5'-UACAU-3' in single-stranded RNA. Neutralized by coexpression with cognate antitoxin MazE.</text>
</comment>
<comment type="subunit">
    <text evidence="1">Forms a complex with MazE which is no longer active as an endoribonuclease.</text>
</comment>
<comment type="similarity">
    <text evidence="2">Belongs to the PemK/MazF family.</text>
</comment>
<accession>Q9F7V5</accession>
<dbReference type="EC" id="3.1.-.-"/>
<dbReference type="EMBL" id="AF274004">
    <property type="protein sequence ID" value="AAG23809.1"/>
    <property type="molecule type" value="Genomic_DNA"/>
</dbReference>
<dbReference type="SMR" id="Q9F7V5"/>
<dbReference type="GO" id="GO:0003677">
    <property type="term" value="F:DNA binding"/>
    <property type="evidence" value="ECO:0007669"/>
    <property type="project" value="InterPro"/>
</dbReference>
<dbReference type="GO" id="GO:0003723">
    <property type="term" value="F:RNA binding"/>
    <property type="evidence" value="ECO:0007669"/>
    <property type="project" value="UniProtKB-KW"/>
</dbReference>
<dbReference type="GO" id="GO:0004521">
    <property type="term" value="F:RNA endonuclease activity"/>
    <property type="evidence" value="ECO:0007669"/>
    <property type="project" value="TreeGrafter"/>
</dbReference>
<dbReference type="GO" id="GO:0006402">
    <property type="term" value="P:mRNA catabolic process"/>
    <property type="evidence" value="ECO:0007669"/>
    <property type="project" value="TreeGrafter"/>
</dbReference>
<dbReference type="GO" id="GO:0016075">
    <property type="term" value="P:rRNA catabolic process"/>
    <property type="evidence" value="ECO:0007669"/>
    <property type="project" value="TreeGrafter"/>
</dbReference>
<dbReference type="Gene3D" id="2.30.30.110">
    <property type="match status" value="1"/>
</dbReference>
<dbReference type="InterPro" id="IPR003477">
    <property type="entry name" value="PemK-like"/>
</dbReference>
<dbReference type="InterPro" id="IPR011067">
    <property type="entry name" value="Plasmid_toxin/cell-grow_inhib"/>
</dbReference>
<dbReference type="PANTHER" id="PTHR33988:SF2">
    <property type="entry name" value="ENDORIBONUCLEASE MAZF"/>
    <property type="match status" value="1"/>
</dbReference>
<dbReference type="PANTHER" id="PTHR33988">
    <property type="entry name" value="ENDORIBONUCLEASE MAZF-RELATED"/>
    <property type="match status" value="1"/>
</dbReference>
<dbReference type="Pfam" id="PF02452">
    <property type="entry name" value="PemK_toxin"/>
    <property type="match status" value="1"/>
</dbReference>
<dbReference type="PIRSF" id="PIRSF033490">
    <property type="entry name" value="MazF"/>
    <property type="match status" value="1"/>
</dbReference>
<dbReference type="SUPFAM" id="SSF50118">
    <property type="entry name" value="Cell growth inhibitor/plasmid maintenance toxic component"/>
    <property type="match status" value="1"/>
</dbReference>